<comment type="function">
    <text evidence="2 3 4 5">Membrane receptor that binds the K-D-E-L sequence motif in the C-terminal part of endoplasmic reticulum resident proteins and maintains their localization in that compartment by participating to their vesicle-mediated recycling back from the Golgi (PubMed:1325562, PubMed:18086916, PubMed:33053334). Binding is pH dependent, and is optimal at pH 5-5.4 (By similarity).</text>
</comment>
<comment type="subcellular location">
    <subcellularLocation>
        <location evidence="3 4">Endoplasmic reticulum membrane</location>
        <topology evidence="2">Multi-pass membrane protein</topology>
    </subcellularLocation>
    <subcellularLocation>
        <location evidence="3 4">Golgi apparatus membrane</location>
        <topology evidence="2">Multi-pass membrane protein</topology>
    </subcellularLocation>
    <subcellularLocation>
        <location evidence="4">Cytoplasmic vesicle</location>
        <location evidence="4">COPI-coated vesicle membrane</location>
        <topology evidence="2">Multi-pass membrane protein</topology>
    </subcellularLocation>
    <text evidence="3 10">Localized in the Golgi in the absence of bound proteins with the sequence motif K-D-E-L. Trafficks back to the endoplasmic reticulum together with cargo proteins containing the sequence motif K-D-E-L.</text>
</comment>
<comment type="alternative products">
    <event type="alternative splicing"/>
    <isoform>
        <id>P33947-1</id>
        <name>1</name>
        <sequence type="displayed"/>
    </isoform>
    <isoform>
        <id>P33947-2</id>
        <name>2</name>
        <sequence type="described" ref="VSP_036712"/>
    </isoform>
</comment>
<comment type="domain">
    <text evidence="1 2">Binds the C-terminal sequence motif K-D-E-L in a hydrophilic cavity between the transmembrane domains. This triggers a conformation change that exposes a Lys-rich patch on the cytosolic surface of the protein (By similarity). This patch mediates recycling from the Golgi to the endoplasmic reticulum, probably via COPI vesicles (By similarity).</text>
</comment>
<comment type="disease" evidence="5 6">
    <disease id="DI-05995">
        <name>Osteogenesis imperfecta 21</name>
        <acronym>OI21</acronym>
        <description>An autosomal recessive form of osteogenesis imperfecta, a disorder of bone formation characterized by low bone mass, bone fragility and susceptibility to fractures after minimal trauma. Disease severity ranges from very mild forms without fractures to intrauterine fractures and perinatal lethality. Extraskeletal manifestations, which affect a variable number of patients, are dentinogenesis imperfecta, hearing loss, and blue sclerae. OI21 is a progressively deforming form characterized by multiple fractures appearing at birth or early childhood.</description>
        <dbReference type="MIM" id="619131"/>
    </disease>
    <text>The disease is caused by variants affecting the gene represented in this entry.</text>
</comment>
<comment type="similarity">
    <text evidence="9">Belongs to the ERD2 family.</text>
</comment>
<organism>
    <name type="scientific">Homo sapiens</name>
    <name type="common">Human</name>
    <dbReference type="NCBI Taxonomy" id="9606"/>
    <lineage>
        <taxon>Eukaryota</taxon>
        <taxon>Metazoa</taxon>
        <taxon>Chordata</taxon>
        <taxon>Craniata</taxon>
        <taxon>Vertebrata</taxon>
        <taxon>Euteleostomi</taxon>
        <taxon>Mammalia</taxon>
        <taxon>Eutheria</taxon>
        <taxon>Euarchontoglires</taxon>
        <taxon>Primates</taxon>
        <taxon>Haplorrhini</taxon>
        <taxon>Catarrhini</taxon>
        <taxon>Hominidae</taxon>
        <taxon>Homo</taxon>
    </lineage>
</organism>
<accession>P33947</accession>
<accession>A4D2P4</accession>
<accession>Q6IPC5</accession>
<accession>Q96E30</accession>
<sequence length="212" mass="24422">MNIFRLTGDLSHLAAIVILLLKIWKTRSCAGISGKSQLLFALVFTTRYLDLFTSFISLYNTSMKVIYLACSYATVYLIYLKFKATYDGNHDTFRVEFLVVPVGGLSFLVNHDFSPLEILWTFSIYLESVAILPQLFMISKTGEAETITTHYLFFLGLYRALYLVNWIWRFYFEGFFDLIAVVAGVVQTILYCDFFYLYITKVLKGKKLSLPA</sequence>
<proteinExistence type="evidence at protein level"/>
<reference key="1">
    <citation type="journal article" date="1992" name="J. Mol. Biol.">
        <title>Sequence of a second human KDEL receptor.</title>
        <authorList>
            <person name="Lewis M.J."/>
            <person name="Pelham H.R.B."/>
        </authorList>
    </citation>
    <scope>NUCLEOTIDE SEQUENCE [MRNA] (ISOFORM 1)</scope>
    <scope>SUBCELLULAR LOCATION</scope>
    <scope>FUNCTION</scope>
    <source>
        <tissue>Placenta</tissue>
    </source>
</reference>
<reference key="2">
    <citation type="journal article" date="1992" name="Cell">
        <title>A brefeldin A-like phenotype is induced by the overexpression of a human ERD-2-like protein, ELP-1.</title>
        <authorList>
            <person name="Hsu V.W."/>
            <person name="Shah N."/>
            <person name="Klausner R.D."/>
        </authorList>
    </citation>
    <scope>NUCLEOTIDE SEQUENCE [MRNA] (ISOFORM 1)</scope>
</reference>
<reference key="3">
    <citation type="journal article" date="2004" name="Nat. Genet.">
        <title>Complete sequencing and characterization of 21,243 full-length human cDNAs.</title>
        <authorList>
            <person name="Ota T."/>
            <person name="Suzuki Y."/>
            <person name="Nishikawa T."/>
            <person name="Otsuki T."/>
            <person name="Sugiyama T."/>
            <person name="Irie R."/>
            <person name="Wakamatsu A."/>
            <person name="Hayashi K."/>
            <person name="Sato H."/>
            <person name="Nagai K."/>
            <person name="Kimura K."/>
            <person name="Makita H."/>
            <person name="Sekine M."/>
            <person name="Obayashi M."/>
            <person name="Nishi T."/>
            <person name="Shibahara T."/>
            <person name="Tanaka T."/>
            <person name="Ishii S."/>
            <person name="Yamamoto J."/>
            <person name="Saito K."/>
            <person name="Kawai Y."/>
            <person name="Isono Y."/>
            <person name="Nakamura Y."/>
            <person name="Nagahari K."/>
            <person name="Murakami K."/>
            <person name="Yasuda T."/>
            <person name="Iwayanagi T."/>
            <person name="Wagatsuma M."/>
            <person name="Shiratori A."/>
            <person name="Sudo H."/>
            <person name="Hosoiri T."/>
            <person name="Kaku Y."/>
            <person name="Kodaira H."/>
            <person name="Kondo H."/>
            <person name="Sugawara M."/>
            <person name="Takahashi M."/>
            <person name="Kanda K."/>
            <person name="Yokoi T."/>
            <person name="Furuya T."/>
            <person name="Kikkawa E."/>
            <person name="Omura Y."/>
            <person name="Abe K."/>
            <person name="Kamihara K."/>
            <person name="Katsuta N."/>
            <person name="Sato K."/>
            <person name="Tanikawa M."/>
            <person name="Yamazaki M."/>
            <person name="Ninomiya K."/>
            <person name="Ishibashi T."/>
            <person name="Yamashita H."/>
            <person name="Murakawa K."/>
            <person name="Fujimori K."/>
            <person name="Tanai H."/>
            <person name="Kimata M."/>
            <person name="Watanabe M."/>
            <person name="Hiraoka S."/>
            <person name="Chiba Y."/>
            <person name="Ishida S."/>
            <person name="Ono Y."/>
            <person name="Takiguchi S."/>
            <person name="Watanabe S."/>
            <person name="Yosida M."/>
            <person name="Hotuta T."/>
            <person name="Kusano J."/>
            <person name="Kanehori K."/>
            <person name="Takahashi-Fujii A."/>
            <person name="Hara H."/>
            <person name="Tanase T.-O."/>
            <person name="Nomura Y."/>
            <person name="Togiya S."/>
            <person name="Komai F."/>
            <person name="Hara R."/>
            <person name="Takeuchi K."/>
            <person name="Arita M."/>
            <person name="Imose N."/>
            <person name="Musashino K."/>
            <person name="Yuuki H."/>
            <person name="Oshima A."/>
            <person name="Sasaki N."/>
            <person name="Aotsuka S."/>
            <person name="Yoshikawa Y."/>
            <person name="Matsunawa H."/>
            <person name="Ichihara T."/>
            <person name="Shiohata N."/>
            <person name="Sano S."/>
            <person name="Moriya S."/>
            <person name="Momiyama H."/>
            <person name="Satoh N."/>
            <person name="Takami S."/>
            <person name="Terashima Y."/>
            <person name="Suzuki O."/>
            <person name="Nakagawa S."/>
            <person name="Senoh A."/>
            <person name="Mizoguchi H."/>
            <person name="Goto Y."/>
            <person name="Shimizu F."/>
            <person name="Wakebe H."/>
            <person name="Hishigaki H."/>
            <person name="Watanabe T."/>
            <person name="Sugiyama A."/>
            <person name="Takemoto M."/>
            <person name="Kawakami B."/>
            <person name="Yamazaki M."/>
            <person name="Watanabe K."/>
            <person name="Kumagai A."/>
            <person name="Itakura S."/>
            <person name="Fukuzumi Y."/>
            <person name="Fujimori Y."/>
            <person name="Komiyama M."/>
            <person name="Tashiro H."/>
            <person name="Tanigami A."/>
            <person name="Fujiwara T."/>
            <person name="Ono T."/>
            <person name="Yamada K."/>
            <person name="Fujii Y."/>
            <person name="Ozaki K."/>
            <person name="Hirao M."/>
            <person name="Ohmori Y."/>
            <person name="Kawabata A."/>
            <person name="Hikiji T."/>
            <person name="Kobatake N."/>
            <person name="Inagaki H."/>
            <person name="Ikema Y."/>
            <person name="Okamoto S."/>
            <person name="Okitani R."/>
            <person name="Kawakami T."/>
            <person name="Noguchi S."/>
            <person name="Itoh T."/>
            <person name="Shigeta K."/>
            <person name="Senba T."/>
            <person name="Matsumura K."/>
            <person name="Nakajima Y."/>
            <person name="Mizuno T."/>
            <person name="Morinaga M."/>
            <person name="Sasaki M."/>
            <person name="Togashi T."/>
            <person name="Oyama M."/>
            <person name="Hata H."/>
            <person name="Watanabe M."/>
            <person name="Komatsu T."/>
            <person name="Mizushima-Sugano J."/>
            <person name="Satoh T."/>
            <person name="Shirai Y."/>
            <person name="Takahashi Y."/>
            <person name="Nakagawa K."/>
            <person name="Okumura K."/>
            <person name="Nagase T."/>
            <person name="Nomura N."/>
            <person name="Kikuchi H."/>
            <person name="Masuho Y."/>
            <person name="Yamashita R."/>
            <person name="Nakai K."/>
            <person name="Yada T."/>
            <person name="Nakamura Y."/>
            <person name="Ohara O."/>
            <person name="Isogai T."/>
            <person name="Sugano S."/>
        </authorList>
    </citation>
    <scope>NUCLEOTIDE SEQUENCE [LARGE SCALE MRNA] (ISOFORM 1)</scope>
    <source>
        <tissue>Testis</tissue>
    </source>
</reference>
<reference key="4">
    <citation type="journal article" date="2003" name="Nature">
        <title>The DNA sequence of human chromosome 7.</title>
        <authorList>
            <person name="Hillier L.W."/>
            <person name="Fulton R.S."/>
            <person name="Fulton L.A."/>
            <person name="Graves T.A."/>
            <person name="Pepin K.H."/>
            <person name="Wagner-McPherson C."/>
            <person name="Layman D."/>
            <person name="Maas J."/>
            <person name="Jaeger S."/>
            <person name="Walker R."/>
            <person name="Wylie K."/>
            <person name="Sekhon M."/>
            <person name="Becker M.C."/>
            <person name="O'Laughlin M.D."/>
            <person name="Schaller M.E."/>
            <person name="Fewell G.A."/>
            <person name="Delehaunty K.D."/>
            <person name="Miner T.L."/>
            <person name="Nash W.E."/>
            <person name="Cordes M."/>
            <person name="Du H."/>
            <person name="Sun H."/>
            <person name="Edwards J."/>
            <person name="Bradshaw-Cordum H."/>
            <person name="Ali J."/>
            <person name="Andrews S."/>
            <person name="Isak A."/>
            <person name="Vanbrunt A."/>
            <person name="Nguyen C."/>
            <person name="Du F."/>
            <person name="Lamar B."/>
            <person name="Courtney L."/>
            <person name="Kalicki J."/>
            <person name="Ozersky P."/>
            <person name="Bielicki L."/>
            <person name="Scott K."/>
            <person name="Holmes A."/>
            <person name="Harkins R."/>
            <person name="Harris A."/>
            <person name="Strong C.M."/>
            <person name="Hou S."/>
            <person name="Tomlinson C."/>
            <person name="Dauphin-Kohlberg S."/>
            <person name="Kozlowicz-Reilly A."/>
            <person name="Leonard S."/>
            <person name="Rohlfing T."/>
            <person name="Rock S.M."/>
            <person name="Tin-Wollam A.-M."/>
            <person name="Abbott A."/>
            <person name="Minx P."/>
            <person name="Maupin R."/>
            <person name="Strowmatt C."/>
            <person name="Latreille P."/>
            <person name="Miller N."/>
            <person name="Johnson D."/>
            <person name="Murray J."/>
            <person name="Woessner J.P."/>
            <person name="Wendl M.C."/>
            <person name="Yang S.-P."/>
            <person name="Schultz B.R."/>
            <person name="Wallis J.W."/>
            <person name="Spieth J."/>
            <person name="Bieri T.A."/>
            <person name="Nelson J.O."/>
            <person name="Berkowicz N."/>
            <person name="Wohldmann P.E."/>
            <person name="Cook L.L."/>
            <person name="Hickenbotham M.T."/>
            <person name="Eldred J."/>
            <person name="Williams D."/>
            <person name="Bedell J.A."/>
            <person name="Mardis E.R."/>
            <person name="Clifton S.W."/>
            <person name="Chissoe S.L."/>
            <person name="Marra M.A."/>
            <person name="Raymond C."/>
            <person name="Haugen E."/>
            <person name="Gillett W."/>
            <person name="Zhou Y."/>
            <person name="James R."/>
            <person name="Phelps K."/>
            <person name="Iadanoto S."/>
            <person name="Bubb K."/>
            <person name="Simms E."/>
            <person name="Levy R."/>
            <person name="Clendenning J."/>
            <person name="Kaul R."/>
            <person name="Kent W.J."/>
            <person name="Furey T.S."/>
            <person name="Baertsch R.A."/>
            <person name="Brent M.R."/>
            <person name="Keibler E."/>
            <person name="Flicek P."/>
            <person name="Bork P."/>
            <person name="Suyama M."/>
            <person name="Bailey J.A."/>
            <person name="Portnoy M.E."/>
            <person name="Torrents D."/>
            <person name="Chinwalla A.T."/>
            <person name="Gish W.R."/>
            <person name="Eddy S.R."/>
            <person name="McPherson J.D."/>
            <person name="Olson M.V."/>
            <person name="Eichler E.E."/>
            <person name="Green E.D."/>
            <person name="Waterston R.H."/>
            <person name="Wilson R.K."/>
        </authorList>
    </citation>
    <scope>NUCLEOTIDE SEQUENCE [LARGE SCALE GENOMIC DNA]</scope>
</reference>
<reference key="5">
    <citation type="journal article" date="2003" name="Science">
        <title>Human chromosome 7: DNA sequence and biology.</title>
        <authorList>
            <person name="Scherer S.W."/>
            <person name="Cheung J."/>
            <person name="MacDonald J.R."/>
            <person name="Osborne L.R."/>
            <person name="Nakabayashi K."/>
            <person name="Herbrick J.-A."/>
            <person name="Carson A.R."/>
            <person name="Parker-Katiraee L."/>
            <person name="Skaug J."/>
            <person name="Khaja R."/>
            <person name="Zhang J."/>
            <person name="Hudek A.K."/>
            <person name="Li M."/>
            <person name="Haddad M."/>
            <person name="Duggan G.E."/>
            <person name="Fernandez B.A."/>
            <person name="Kanematsu E."/>
            <person name="Gentles S."/>
            <person name="Christopoulos C.C."/>
            <person name="Choufani S."/>
            <person name="Kwasnicka D."/>
            <person name="Zheng X.H."/>
            <person name="Lai Z."/>
            <person name="Nusskern D.R."/>
            <person name="Zhang Q."/>
            <person name="Gu Z."/>
            <person name="Lu F."/>
            <person name="Zeesman S."/>
            <person name="Nowaczyk M.J."/>
            <person name="Teshima I."/>
            <person name="Chitayat D."/>
            <person name="Shuman C."/>
            <person name="Weksberg R."/>
            <person name="Zackai E.H."/>
            <person name="Grebe T.A."/>
            <person name="Cox S.R."/>
            <person name="Kirkpatrick S.J."/>
            <person name="Rahman N."/>
            <person name="Friedman J.M."/>
            <person name="Heng H.H.Q."/>
            <person name="Pelicci P.G."/>
            <person name="Lo-Coco F."/>
            <person name="Belloni E."/>
            <person name="Shaffer L.G."/>
            <person name="Pober B."/>
            <person name="Morton C.C."/>
            <person name="Gusella J.F."/>
            <person name="Bruns G.A.P."/>
            <person name="Korf B.R."/>
            <person name="Quade B.J."/>
            <person name="Ligon A.H."/>
            <person name="Ferguson H."/>
            <person name="Higgins A.W."/>
            <person name="Leach N.T."/>
            <person name="Herrick S.R."/>
            <person name="Lemyre E."/>
            <person name="Farra C.G."/>
            <person name="Kim H.-G."/>
            <person name="Summers A.M."/>
            <person name="Gripp K.W."/>
            <person name="Roberts W."/>
            <person name="Szatmari P."/>
            <person name="Winsor E.J.T."/>
            <person name="Grzeschik K.-H."/>
            <person name="Teebi A."/>
            <person name="Minassian B.A."/>
            <person name="Kere J."/>
            <person name="Armengol L."/>
            <person name="Pujana M.A."/>
            <person name="Estivill X."/>
            <person name="Wilson M.D."/>
            <person name="Koop B.F."/>
            <person name="Tosi S."/>
            <person name="Moore G.E."/>
            <person name="Boright A.P."/>
            <person name="Zlotorynski E."/>
            <person name="Kerem B."/>
            <person name="Kroisel P.M."/>
            <person name="Petek E."/>
            <person name="Oscier D.G."/>
            <person name="Mould S.J."/>
            <person name="Doehner H."/>
            <person name="Doehner K."/>
            <person name="Rommens J.M."/>
            <person name="Vincent J.B."/>
            <person name="Venter J.C."/>
            <person name="Li P.W."/>
            <person name="Mural R.J."/>
            <person name="Adams M.D."/>
            <person name="Tsui L.-C."/>
        </authorList>
    </citation>
    <scope>NUCLEOTIDE SEQUENCE [LARGE SCALE GENOMIC DNA]</scope>
</reference>
<reference key="6">
    <citation type="journal article" date="2004" name="Genome Res.">
        <title>The status, quality, and expansion of the NIH full-length cDNA project: the Mammalian Gene Collection (MGC).</title>
        <authorList>
            <consortium name="The MGC Project Team"/>
        </authorList>
    </citation>
    <scope>NUCLEOTIDE SEQUENCE [LARGE SCALE MRNA] (ISOFORMS 1 AND 2)</scope>
    <source>
        <tissue>Brain</tissue>
        <tissue>Skin</tissue>
        <tissue>Uterus</tissue>
    </source>
</reference>
<reference key="7">
    <citation type="journal article" date="2007" name="J. Cell Biol.">
        <title>A molecular specificity code for the three mammalian KDEL receptors.</title>
        <authorList>
            <person name="Raykhel I."/>
            <person name="Alanen H."/>
            <person name="Salo K."/>
            <person name="Jurvansuu J."/>
            <person name="Nguyen V.D."/>
            <person name="Latva-Ranta M."/>
            <person name="Ruddock L."/>
        </authorList>
    </citation>
    <scope>FUNCTION</scope>
    <scope>SUBCELLULAR LOCATION</scope>
</reference>
<reference key="8">
    <citation type="journal article" date="2015" name="Proteomics">
        <title>N-terminome analysis of the human mitochondrial proteome.</title>
        <authorList>
            <person name="Vaca Jacome A.S."/>
            <person name="Rabilloud T."/>
            <person name="Schaeffer-Reiss C."/>
            <person name="Rompais M."/>
            <person name="Ayoub D."/>
            <person name="Lane L."/>
            <person name="Bairoch A."/>
            <person name="Van Dorsselaer A."/>
            <person name="Carapito C."/>
        </authorList>
    </citation>
    <scope>IDENTIFICATION BY MASS SPECTROMETRY [LARGE SCALE ANALYSIS]</scope>
</reference>
<reference key="9">
    <citation type="journal article" date="2020" name="Am. J. Hum. Genet.">
        <title>Interaction between KDELR2 and HSP47 as a Key Determinant in Osteogenesis Imperfecta Caused by Bi-allelic Variants in KDELR2.</title>
        <authorList>
            <person name="van Dijk F.S."/>
            <person name="Semler O."/>
            <person name="Etich J."/>
            <person name="Koehler A."/>
            <person name="Jimenez-Estrada J.A."/>
            <person name="Bravenboer N."/>
            <person name="Claeys L."/>
            <person name="Riesebos E."/>
            <person name="Gegic S."/>
            <person name="Piersma S.R."/>
            <person name="Jimenez C.R."/>
            <person name="Waisfisz Q."/>
            <person name="Flores C.L."/>
            <person name="Nevado J."/>
            <person name="Harsevoort A.J."/>
            <person name="Janus G.J.M."/>
            <person name="Franken A.A.M."/>
            <person name="van der Sar A.M."/>
            <person name="Meijers-Heijboer H."/>
            <person name="Heath K.E."/>
            <person name="Lapunzina P."/>
            <person name="Nikkels P.G.J."/>
            <person name="Santen G.W.E."/>
            <person name="Nuechel J."/>
            <person name="Plomann M."/>
            <person name="Wagener R."/>
            <person name="Rehberg M."/>
            <person name="Hoyer-Kuhn H."/>
            <person name="Eekhoff E.M.W."/>
            <person name="Pals G."/>
            <person name="Moergelin M."/>
            <person name="Newstead S."/>
            <person name="Wilson B.T."/>
            <person name="Ruiz-Perez V.L."/>
            <person name="Maugeri A."/>
            <person name="Netzer C."/>
            <person name="Zaucke F."/>
            <person name="Micha D."/>
        </authorList>
    </citation>
    <scope>INVOLVEMENT IN OI21</scope>
    <scope>VARIANTS OI21 ASP-12; 120-TRP--ALA-212 DEL AND LEU-133</scope>
    <scope>CHARACTERIZATION OF VARIANTS OI21 ASP-12 AND 120-TRP--ALA-212 DEL</scope>
    <scope>FUNCTION</scope>
</reference>
<reference key="10">
    <citation type="journal article" date="2021" name="Am. J. Med. Genet. A">
        <title>Two novel bi-allelic KDELR2 missense variants cause osteogenesis imperfecta with neurodevelopmental features.</title>
        <authorList>
            <consortium name="SYNAPS Study Group"/>
            <person name="Efthymiou S."/>
            <person name="Herman I."/>
            <person name="Rahman F."/>
            <person name="Anwar N."/>
            <person name="Maroofian R."/>
            <person name="Yip J."/>
            <person name="Mitani T."/>
            <person name="Calame D.G."/>
            <person name="Hunter J.V."/>
            <person name="Sutton V.R."/>
            <person name="Yilmaz Gulec E."/>
            <person name="Duan R."/>
            <person name="Fatih J.M."/>
            <person name="Marafi D."/>
            <person name="Pehlivan D."/>
            <person name="Jhangiani S.N."/>
            <person name="Gibbs R.A."/>
            <person name="Posey J.E."/>
            <person name="Maqbool S."/>
            <person name="Lupski J.R."/>
            <person name="Houlden H."/>
        </authorList>
    </citation>
    <scope>VARIANTS OI21 TRP-5 AND CYS-162</scope>
</reference>
<name>ERD22_HUMAN</name>
<gene>
    <name type="primary">KDELR2</name>
    <name evidence="7" type="synonym">ERD2.2</name>
</gene>
<dbReference type="EMBL" id="X63745">
    <property type="protein sequence ID" value="CAA45277.1"/>
    <property type="molecule type" value="mRNA"/>
</dbReference>
<dbReference type="EMBL" id="M88458">
    <property type="status" value="NOT_ANNOTATED_CDS"/>
    <property type="molecule type" value="mRNA"/>
</dbReference>
<dbReference type="EMBL" id="AC072052">
    <property type="protein sequence ID" value="AAS02002.1"/>
    <property type="molecule type" value="Genomic_DNA"/>
</dbReference>
<dbReference type="EMBL" id="AK315702">
    <property type="protein sequence ID" value="BAG38064.1"/>
    <property type="molecule type" value="mRNA"/>
</dbReference>
<dbReference type="EMBL" id="CH236963">
    <property type="protein sequence ID" value="EAL23722.1"/>
    <property type="molecule type" value="Genomic_DNA"/>
</dbReference>
<dbReference type="EMBL" id="CH878731">
    <property type="protein sequence ID" value="EAW55030.1"/>
    <property type="molecule type" value="Genomic_DNA"/>
</dbReference>
<dbReference type="EMBL" id="BC008081">
    <property type="protein sequence ID" value="AAH08081.1"/>
    <property type="molecule type" value="mRNA"/>
</dbReference>
<dbReference type="EMBL" id="BC012994">
    <property type="protein sequence ID" value="AAH12994.1"/>
    <property type="molecule type" value="mRNA"/>
</dbReference>
<dbReference type="EMBL" id="BC071982">
    <property type="protein sequence ID" value="AAH71982.1"/>
    <property type="molecule type" value="mRNA"/>
</dbReference>
<dbReference type="CCDS" id="CCDS43550.1">
    <molecule id="P33947-2"/>
</dbReference>
<dbReference type="CCDS" id="CCDS5351.1">
    <molecule id="P33947-1"/>
</dbReference>
<dbReference type="PIR" id="A42286">
    <property type="entry name" value="A42286"/>
</dbReference>
<dbReference type="RefSeq" id="NP_001094073.1">
    <molecule id="P33947-2"/>
    <property type="nucleotide sequence ID" value="NM_001100603.2"/>
</dbReference>
<dbReference type="RefSeq" id="NP_006845.1">
    <molecule id="P33947-1"/>
    <property type="nucleotide sequence ID" value="NM_006854.4"/>
</dbReference>
<dbReference type="SMR" id="P33947"/>
<dbReference type="BioGRID" id="116204">
    <property type="interactions" value="150"/>
</dbReference>
<dbReference type="FunCoup" id="P33947">
    <property type="interactions" value="1912"/>
</dbReference>
<dbReference type="IntAct" id="P33947">
    <property type="interactions" value="68"/>
</dbReference>
<dbReference type="MINT" id="P33947"/>
<dbReference type="STRING" id="9606.ENSP00000258739"/>
<dbReference type="iPTMnet" id="P33947"/>
<dbReference type="PhosphoSitePlus" id="P33947"/>
<dbReference type="SwissPalm" id="P33947"/>
<dbReference type="BioMuta" id="KDELR2"/>
<dbReference type="DMDM" id="462018"/>
<dbReference type="jPOST" id="P33947"/>
<dbReference type="MassIVE" id="P33947"/>
<dbReference type="PaxDb" id="9606-ENSP00000258739"/>
<dbReference type="PeptideAtlas" id="P33947"/>
<dbReference type="ProteomicsDB" id="54930">
    <molecule id="P33947-1"/>
</dbReference>
<dbReference type="ProteomicsDB" id="54931">
    <molecule id="P33947-2"/>
</dbReference>
<dbReference type="Pumba" id="P33947"/>
<dbReference type="TopDownProteomics" id="P33947-1">
    <molecule id="P33947-1"/>
</dbReference>
<dbReference type="TopDownProteomics" id="P33947-2">
    <molecule id="P33947-2"/>
</dbReference>
<dbReference type="Antibodypedia" id="11644">
    <property type="antibodies" value="171 antibodies from 26 providers"/>
</dbReference>
<dbReference type="DNASU" id="11014"/>
<dbReference type="Ensembl" id="ENST00000258739.9">
    <molecule id="P33947-1"/>
    <property type="protein sequence ID" value="ENSP00000258739.4"/>
    <property type="gene ID" value="ENSG00000136240.10"/>
</dbReference>
<dbReference type="Ensembl" id="ENST00000490996.1">
    <molecule id="P33947-2"/>
    <property type="protein sequence ID" value="ENSP00000420501.1"/>
    <property type="gene ID" value="ENSG00000136240.10"/>
</dbReference>
<dbReference type="GeneID" id="11014"/>
<dbReference type="KEGG" id="hsa:11014"/>
<dbReference type="MANE-Select" id="ENST00000258739.9">
    <property type="protein sequence ID" value="ENSP00000258739.4"/>
    <property type="RefSeq nucleotide sequence ID" value="NM_006854.4"/>
    <property type="RefSeq protein sequence ID" value="NP_006845.1"/>
</dbReference>
<dbReference type="UCSC" id="uc003sqe.5">
    <molecule id="P33947-1"/>
    <property type="organism name" value="human"/>
</dbReference>
<dbReference type="AGR" id="HGNC:6305"/>
<dbReference type="CTD" id="11014"/>
<dbReference type="DisGeNET" id="11014"/>
<dbReference type="GeneCards" id="KDELR2"/>
<dbReference type="HGNC" id="HGNC:6305">
    <property type="gene designation" value="KDELR2"/>
</dbReference>
<dbReference type="HPA" id="ENSG00000136240">
    <property type="expression patterns" value="Low tissue specificity"/>
</dbReference>
<dbReference type="MalaCards" id="KDELR2"/>
<dbReference type="MIM" id="609024">
    <property type="type" value="gene"/>
</dbReference>
<dbReference type="MIM" id="619131">
    <property type="type" value="phenotype"/>
</dbReference>
<dbReference type="neXtProt" id="NX_P33947"/>
<dbReference type="OpenTargets" id="ENSG00000136240"/>
<dbReference type="PharmGKB" id="PA30084"/>
<dbReference type="VEuPathDB" id="HostDB:ENSG00000136240"/>
<dbReference type="eggNOG" id="KOG3106">
    <property type="taxonomic scope" value="Eukaryota"/>
</dbReference>
<dbReference type="GeneTree" id="ENSGT00390000004010"/>
<dbReference type="HOGENOM" id="CLU_057784_0_0_1"/>
<dbReference type="InParanoid" id="P33947"/>
<dbReference type="OMA" id="WKSRSCE"/>
<dbReference type="OrthoDB" id="7694678at2759"/>
<dbReference type="PAN-GO" id="P33947">
    <property type="GO annotations" value="5 GO annotations based on evolutionary models"/>
</dbReference>
<dbReference type="PhylomeDB" id="P33947"/>
<dbReference type="TreeFam" id="TF314792"/>
<dbReference type="PathwayCommons" id="P33947"/>
<dbReference type="Reactome" id="R-HSA-6807878">
    <property type="pathway name" value="COPI-mediated anterograde transport"/>
</dbReference>
<dbReference type="Reactome" id="R-HSA-6811434">
    <property type="pathway name" value="COPI-dependent Golgi-to-ER retrograde traffic"/>
</dbReference>
<dbReference type="SignaLink" id="P33947"/>
<dbReference type="BioGRID-ORCS" id="11014">
    <property type="hits" value="42 hits in 1146 CRISPR screens"/>
</dbReference>
<dbReference type="ChiTaRS" id="KDELR2">
    <property type="organism name" value="human"/>
</dbReference>
<dbReference type="GeneWiki" id="KDELR2"/>
<dbReference type="GenomeRNAi" id="11014"/>
<dbReference type="Pharos" id="P33947">
    <property type="development level" value="Tbio"/>
</dbReference>
<dbReference type="PRO" id="PR:P33947"/>
<dbReference type="Proteomes" id="UP000005640">
    <property type="component" value="Chromosome 7"/>
</dbReference>
<dbReference type="RNAct" id="P33947">
    <property type="molecule type" value="protein"/>
</dbReference>
<dbReference type="Bgee" id="ENSG00000136240">
    <property type="expression patterns" value="Expressed in stromal cell of endometrium and 211 other cell types or tissues"/>
</dbReference>
<dbReference type="ExpressionAtlas" id="P33947">
    <property type="expression patterns" value="baseline and differential"/>
</dbReference>
<dbReference type="GO" id="GO:0005801">
    <property type="term" value="C:cis-Golgi network"/>
    <property type="evidence" value="ECO:0000318"/>
    <property type="project" value="GO_Central"/>
</dbReference>
<dbReference type="GO" id="GO:0030663">
    <property type="term" value="C:COPI-coated vesicle membrane"/>
    <property type="evidence" value="ECO:0007669"/>
    <property type="project" value="UniProtKB-SubCell"/>
</dbReference>
<dbReference type="GO" id="GO:0005783">
    <property type="term" value="C:endoplasmic reticulum"/>
    <property type="evidence" value="ECO:0000318"/>
    <property type="project" value="GO_Central"/>
</dbReference>
<dbReference type="GO" id="GO:0005789">
    <property type="term" value="C:endoplasmic reticulum membrane"/>
    <property type="evidence" value="ECO:0000314"/>
    <property type="project" value="UniProtKB"/>
</dbReference>
<dbReference type="GO" id="GO:0000139">
    <property type="term" value="C:Golgi membrane"/>
    <property type="evidence" value="ECO:0000314"/>
    <property type="project" value="UniProtKB"/>
</dbReference>
<dbReference type="GO" id="GO:0016020">
    <property type="term" value="C:membrane"/>
    <property type="evidence" value="ECO:0000250"/>
    <property type="project" value="UniProtKB"/>
</dbReference>
<dbReference type="GO" id="GO:0030133">
    <property type="term" value="C:transport vesicle"/>
    <property type="evidence" value="ECO:0000304"/>
    <property type="project" value="Reactome"/>
</dbReference>
<dbReference type="GO" id="GO:0046923">
    <property type="term" value="F:ER retention sequence binding"/>
    <property type="evidence" value="ECO:0000318"/>
    <property type="project" value="GO_Central"/>
</dbReference>
<dbReference type="GO" id="GO:0005046">
    <property type="term" value="F:KDEL sequence binding"/>
    <property type="evidence" value="ECO:0000314"/>
    <property type="project" value="UniProtKB"/>
</dbReference>
<dbReference type="GO" id="GO:0035437">
    <property type="term" value="P:maintenance of protein localization in endoplasmic reticulum"/>
    <property type="evidence" value="ECO:0000315"/>
    <property type="project" value="UniProtKB"/>
</dbReference>
<dbReference type="GO" id="GO:0006621">
    <property type="term" value="P:protein retention in ER lumen"/>
    <property type="evidence" value="ECO:0000318"/>
    <property type="project" value="GO_Central"/>
</dbReference>
<dbReference type="GO" id="GO:0015031">
    <property type="term" value="P:protein transport"/>
    <property type="evidence" value="ECO:0007669"/>
    <property type="project" value="UniProtKB-KW"/>
</dbReference>
<dbReference type="GO" id="GO:0006890">
    <property type="term" value="P:retrograde vesicle-mediated transport, Golgi to endoplasmic reticulum"/>
    <property type="evidence" value="ECO:0000314"/>
    <property type="project" value="UniProtKB"/>
</dbReference>
<dbReference type="InterPro" id="IPR000133">
    <property type="entry name" value="ER_ret_rcpt"/>
</dbReference>
<dbReference type="PANTHER" id="PTHR10585">
    <property type="entry name" value="ER LUMEN PROTEIN RETAINING RECEPTOR"/>
    <property type="match status" value="1"/>
</dbReference>
<dbReference type="Pfam" id="PF00810">
    <property type="entry name" value="ER_lumen_recept"/>
    <property type="match status" value="1"/>
</dbReference>
<dbReference type="PRINTS" id="PR00660">
    <property type="entry name" value="ERLUMENR"/>
</dbReference>
<dbReference type="PROSITE" id="PS00951">
    <property type="entry name" value="ER_LUMEN_RECEPTOR_1"/>
    <property type="match status" value="1"/>
</dbReference>
<dbReference type="PROSITE" id="PS00952">
    <property type="entry name" value="ER_LUMEN_RECEPTOR_2"/>
    <property type="match status" value="1"/>
</dbReference>
<feature type="chain" id="PRO_0000194155" description="ER lumen protein-retaining receptor 2">
    <location>
        <begin position="1"/>
        <end position="212"/>
    </location>
</feature>
<feature type="topological domain" description="Lumenal" evidence="9">
    <location>
        <begin position="1"/>
        <end position="4"/>
    </location>
</feature>
<feature type="transmembrane region" description="Helical" evidence="2">
    <location>
        <begin position="5"/>
        <end position="24"/>
    </location>
</feature>
<feature type="topological domain" description="Cytoplasmic" evidence="9">
    <location>
        <begin position="25"/>
        <end position="32"/>
    </location>
</feature>
<feature type="transmembrane region" description="Helical" evidence="2">
    <location>
        <begin position="33"/>
        <end position="52"/>
    </location>
</feature>
<feature type="topological domain" description="Lumenal" evidence="9">
    <location>
        <begin position="53"/>
        <end position="58"/>
    </location>
</feature>
<feature type="transmembrane region" description="Helical" evidence="2">
    <location>
        <begin position="59"/>
        <end position="79"/>
    </location>
</feature>
<feature type="topological domain" description="Cytoplasmic" evidence="9">
    <location>
        <begin position="80"/>
        <end position="92"/>
    </location>
</feature>
<feature type="transmembrane region" description="Helical" evidence="2">
    <location>
        <begin position="93"/>
        <end position="110"/>
    </location>
</feature>
<feature type="topological domain" description="Lumenal" evidence="9">
    <location>
        <begin position="111"/>
        <end position="116"/>
    </location>
</feature>
<feature type="transmembrane region" description="Helical" evidence="2">
    <location>
        <begin position="117"/>
        <end position="135"/>
    </location>
</feature>
<feature type="topological domain" description="Cytoplasmic" evidence="9">
    <location>
        <begin position="136"/>
        <end position="149"/>
    </location>
</feature>
<feature type="transmembrane region" description="Helical" evidence="2">
    <location>
        <begin position="150"/>
        <end position="168"/>
    </location>
</feature>
<feature type="topological domain" description="Lumenal" evidence="9">
    <location>
        <begin position="169"/>
        <end position="178"/>
    </location>
</feature>
<feature type="transmembrane region" description="Helical" evidence="2">
    <location>
        <begin position="179"/>
        <end position="199"/>
    </location>
</feature>
<feature type="topological domain" description="Cytoplasmic" evidence="9">
    <location>
        <begin position="200"/>
        <end position="212"/>
    </location>
</feature>
<feature type="region of interest" description="Interaction with the K-D-E-L motif on target proteins" evidence="2">
    <location>
        <begin position="47"/>
        <end position="48"/>
    </location>
</feature>
<feature type="region of interest" description="Interaction with the K-D-E-L motif on target proteins" evidence="2">
    <location>
        <begin position="159"/>
        <end position="169"/>
    </location>
</feature>
<feature type="region of interest" description="Important for recycling of cargo proteins with the sequence motif K-D-E-L from the Golgi to the endoplasmic reticulum" evidence="1">
    <location>
        <begin position="204"/>
        <end position="207"/>
    </location>
</feature>
<feature type="site" description="Interaction with the K-D-E-L motif on target proteins" evidence="2">
    <location>
        <position position="5"/>
    </location>
</feature>
<feature type="site" description="Interaction with the K-D-E-L motif on target proteins" evidence="2">
    <location>
        <position position="54"/>
    </location>
</feature>
<feature type="site" description="Interaction with the K-D-E-L motif on target proteins" evidence="2">
    <location>
        <position position="117"/>
    </location>
</feature>
<feature type="site" description="Important for recycling of cargo proteins with the sequence motif K-D-E-L from the Golgi to the endoplasmic reticulum" evidence="1">
    <location>
        <position position="193"/>
    </location>
</feature>
<feature type="splice variant" id="VSP_036712" description="In isoform 2." evidence="8">
    <original>ILWTFSIYLESVAILPQLFMISKTGEAETITTHYLFFLGLYRALYLVNWIWRFYFEGFFDLIAVVAGVVQTILYCDFFYLYITKVLKGKKLSLPA</original>
    <variation>YSRERSSVCQHKCQRPSPASVLQGARTEFLPQQRHKMLDTENQKLNSFVADSHQWLCKNAEEKSQKVSV</variation>
    <location>
        <begin position="118"/>
        <end position="212"/>
    </location>
</feature>
<feature type="sequence variant" id="VAR_085601" description="In OI21; uncertain significance; dbSNP:rs1265005474." evidence="6">
    <original>R</original>
    <variation>W</variation>
    <location>
        <position position="5"/>
    </location>
</feature>
<feature type="sequence variant" id="VAR_085602" description="In OI21; changed maintenance of protein localization in endoplasmic reticulum; SERPINH1 is not retained in the endoplasmic reticulum and secreted; leads to a loss of fiber formation of the bones connective tissue; no effect on protein abundance; dbSNP:rs1785976222." evidence="5">
    <original>H</original>
    <variation>D</variation>
    <location>
        <position position="12"/>
    </location>
</feature>
<feature type="sequence variant" id="VAR_085603" description="In OI21; loss of protein expression; changed maintenance of protein localization in endoplasmic reticulum; SERPINH1 is not retained in the endoplasmic reticulum and secreted; leads to a loss of fiber formation of the bones connective tissue." evidence="5">
    <location>
        <begin position="120"/>
        <end position="212"/>
    </location>
</feature>
<feature type="sequence variant" id="VAR_085604" description="In OI21; uncertain significance; dbSNP:rs1785501859." evidence="5">
    <original>P</original>
    <variation>L</variation>
    <location>
        <position position="133"/>
    </location>
</feature>
<feature type="sequence variant" id="VAR_085605" description="In OI21; uncertain significance; dbSNP:rs1785499146." evidence="6">
    <original>Y</original>
    <variation>C</variation>
    <location>
        <position position="162"/>
    </location>
</feature>
<feature type="sequence conflict" description="In Ref. 6; AAH12994." evidence="9" ref="6">
    <original>M</original>
    <variation>V</variation>
    <location>
        <position position="137"/>
    </location>
</feature>
<protein>
    <recommendedName>
        <fullName>ER lumen protein-retaining receptor 2</fullName>
    </recommendedName>
    <alternativeName>
        <fullName>ERD2-like protein 1</fullName>
        <shortName>ELP-1</shortName>
    </alternativeName>
    <alternativeName>
        <fullName>KDEL endoplasmic reticulum protein retention receptor 2</fullName>
        <shortName>KDEL receptor 2</shortName>
    </alternativeName>
</protein>
<evidence type="ECO:0000250" key="1">
    <source>
        <dbReference type="UniProtKB" id="P24390"/>
    </source>
</evidence>
<evidence type="ECO:0000250" key="2">
    <source>
        <dbReference type="UniProtKB" id="Q5ZKX9"/>
    </source>
</evidence>
<evidence type="ECO:0000269" key="3">
    <source>
    </source>
</evidence>
<evidence type="ECO:0000269" key="4">
    <source>
    </source>
</evidence>
<evidence type="ECO:0000269" key="5">
    <source>
    </source>
</evidence>
<evidence type="ECO:0000269" key="6">
    <source>
    </source>
</evidence>
<evidence type="ECO:0000303" key="7">
    <source>
    </source>
</evidence>
<evidence type="ECO:0000303" key="8">
    <source>
    </source>
</evidence>
<evidence type="ECO:0000305" key="9"/>
<evidence type="ECO:0000305" key="10">
    <source>
    </source>
</evidence>
<keyword id="KW-0025">Alternative splicing</keyword>
<keyword id="KW-0968">Cytoplasmic vesicle</keyword>
<keyword id="KW-0225">Disease variant</keyword>
<keyword id="KW-0256">Endoplasmic reticulum</keyword>
<keyword id="KW-0931">ER-Golgi transport</keyword>
<keyword id="KW-0333">Golgi apparatus</keyword>
<keyword id="KW-0472">Membrane</keyword>
<keyword id="KW-1065">Osteogenesis imperfecta</keyword>
<keyword id="KW-0653">Protein transport</keyword>
<keyword id="KW-1267">Proteomics identification</keyword>
<keyword id="KW-0675">Receptor</keyword>
<keyword id="KW-1185">Reference proteome</keyword>
<keyword id="KW-0812">Transmembrane</keyword>
<keyword id="KW-1133">Transmembrane helix</keyword>
<keyword id="KW-0813">Transport</keyword>